<sequence>MQVILLDKVANLGSLGDQVNVKAGYARNFLVPQGKAVPATKKNIEFFEARRAELEAKLAEVLAAANARAEKINALETVTIASKAGDEGKLFGSIGTRDIADAVTAAGVEVAKSEVRLPNGVLRTTGEHEVSFQVHSEVFAKVIVNVVAE</sequence>
<protein>
    <recommendedName>
        <fullName evidence="1">Large ribosomal subunit protein bL9</fullName>
    </recommendedName>
    <alternativeName>
        <fullName evidence="2">50S ribosomal protein L9</fullName>
    </alternativeName>
</protein>
<dbReference type="EMBL" id="AE014075">
    <property type="protein sequence ID" value="AAN83715.1"/>
    <property type="molecule type" value="Genomic_DNA"/>
</dbReference>
<dbReference type="RefSeq" id="WP_001196062.1">
    <property type="nucleotide sequence ID" value="NZ_CP051263.1"/>
</dbReference>
<dbReference type="SMR" id="P0A7R2"/>
<dbReference type="STRING" id="199310.c5294"/>
<dbReference type="GeneID" id="93777620"/>
<dbReference type="KEGG" id="ecc:c5294"/>
<dbReference type="eggNOG" id="COG0359">
    <property type="taxonomic scope" value="Bacteria"/>
</dbReference>
<dbReference type="HOGENOM" id="CLU_078938_4_1_6"/>
<dbReference type="BioCyc" id="ECOL199310:C5294-MONOMER"/>
<dbReference type="Proteomes" id="UP000001410">
    <property type="component" value="Chromosome"/>
</dbReference>
<dbReference type="GO" id="GO:1990904">
    <property type="term" value="C:ribonucleoprotein complex"/>
    <property type="evidence" value="ECO:0007669"/>
    <property type="project" value="UniProtKB-KW"/>
</dbReference>
<dbReference type="GO" id="GO:0005840">
    <property type="term" value="C:ribosome"/>
    <property type="evidence" value="ECO:0007669"/>
    <property type="project" value="UniProtKB-KW"/>
</dbReference>
<dbReference type="GO" id="GO:0019843">
    <property type="term" value="F:rRNA binding"/>
    <property type="evidence" value="ECO:0007669"/>
    <property type="project" value="UniProtKB-UniRule"/>
</dbReference>
<dbReference type="GO" id="GO:0003735">
    <property type="term" value="F:structural constituent of ribosome"/>
    <property type="evidence" value="ECO:0007669"/>
    <property type="project" value="InterPro"/>
</dbReference>
<dbReference type="GO" id="GO:0006412">
    <property type="term" value="P:translation"/>
    <property type="evidence" value="ECO:0007669"/>
    <property type="project" value="UniProtKB-UniRule"/>
</dbReference>
<dbReference type="FunFam" id="3.10.430.100:FF:000001">
    <property type="entry name" value="50S ribosomal protein L9"/>
    <property type="match status" value="1"/>
</dbReference>
<dbReference type="FunFam" id="3.40.5.10:FF:000001">
    <property type="entry name" value="50S ribosomal protein L9"/>
    <property type="match status" value="1"/>
</dbReference>
<dbReference type="Gene3D" id="3.10.430.100">
    <property type="entry name" value="Ribosomal protein L9, C-terminal domain"/>
    <property type="match status" value="1"/>
</dbReference>
<dbReference type="Gene3D" id="3.40.5.10">
    <property type="entry name" value="Ribosomal protein L9, N-terminal domain"/>
    <property type="match status" value="1"/>
</dbReference>
<dbReference type="HAMAP" id="MF_00503">
    <property type="entry name" value="Ribosomal_bL9"/>
    <property type="match status" value="1"/>
</dbReference>
<dbReference type="InterPro" id="IPR000244">
    <property type="entry name" value="Ribosomal_bL9"/>
</dbReference>
<dbReference type="InterPro" id="IPR009027">
    <property type="entry name" value="Ribosomal_bL9/RNase_H1_N"/>
</dbReference>
<dbReference type="InterPro" id="IPR020594">
    <property type="entry name" value="Ribosomal_bL9_bac/chp"/>
</dbReference>
<dbReference type="InterPro" id="IPR020069">
    <property type="entry name" value="Ribosomal_bL9_C"/>
</dbReference>
<dbReference type="InterPro" id="IPR036791">
    <property type="entry name" value="Ribosomal_bL9_C_sf"/>
</dbReference>
<dbReference type="InterPro" id="IPR020070">
    <property type="entry name" value="Ribosomal_bL9_N"/>
</dbReference>
<dbReference type="InterPro" id="IPR036935">
    <property type="entry name" value="Ribosomal_bL9_N_sf"/>
</dbReference>
<dbReference type="NCBIfam" id="TIGR00158">
    <property type="entry name" value="L9"/>
    <property type="match status" value="1"/>
</dbReference>
<dbReference type="PANTHER" id="PTHR21368">
    <property type="entry name" value="50S RIBOSOMAL PROTEIN L9"/>
    <property type="match status" value="1"/>
</dbReference>
<dbReference type="Pfam" id="PF03948">
    <property type="entry name" value="Ribosomal_L9_C"/>
    <property type="match status" value="1"/>
</dbReference>
<dbReference type="Pfam" id="PF01281">
    <property type="entry name" value="Ribosomal_L9_N"/>
    <property type="match status" value="1"/>
</dbReference>
<dbReference type="SUPFAM" id="SSF55658">
    <property type="entry name" value="L9 N-domain-like"/>
    <property type="match status" value="1"/>
</dbReference>
<dbReference type="SUPFAM" id="SSF55653">
    <property type="entry name" value="Ribosomal protein L9 C-domain"/>
    <property type="match status" value="1"/>
</dbReference>
<dbReference type="PROSITE" id="PS00651">
    <property type="entry name" value="RIBOSOMAL_L9"/>
    <property type="match status" value="1"/>
</dbReference>
<evidence type="ECO:0000255" key="1">
    <source>
        <dbReference type="HAMAP-Rule" id="MF_00503"/>
    </source>
</evidence>
<evidence type="ECO:0000305" key="2"/>
<feature type="chain" id="PRO_0000176637" description="Large ribosomal subunit protein bL9">
    <location>
        <begin position="1"/>
        <end position="149"/>
    </location>
</feature>
<feature type="modified residue" description="N6-acetyllysine" evidence="1">
    <location>
        <position position="89"/>
    </location>
</feature>
<organism>
    <name type="scientific">Escherichia coli O6:H1 (strain CFT073 / ATCC 700928 / UPEC)</name>
    <dbReference type="NCBI Taxonomy" id="199310"/>
    <lineage>
        <taxon>Bacteria</taxon>
        <taxon>Pseudomonadati</taxon>
        <taxon>Pseudomonadota</taxon>
        <taxon>Gammaproteobacteria</taxon>
        <taxon>Enterobacterales</taxon>
        <taxon>Enterobacteriaceae</taxon>
        <taxon>Escherichia</taxon>
    </lineage>
</organism>
<comment type="function">
    <text evidence="1">Binds to the 23S rRNA.</text>
</comment>
<comment type="similarity">
    <text evidence="1">Belongs to the bacterial ribosomal protein bL9 family.</text>
</comment>
<accession>P0A7R2</accession>
<accession>P02418</accession>
<proteinExistence type="inferred from homology"/>
<gene>
    <name evidence="1" type="primary">rplI</name>
    <name type="ordered locus">c5294</name>
</gene>
<reference key="1">
    <citation type="journal article" date="2002" name="Proc. Natl. Acad. Sci. U.S.A.">
        <title>Extensive mosaic structure revealed by the complete genome sequence of uropathogenic Escherichia coli.</title>
        <authorList>
            <person name="Welch R.A."/>
            <person name="Burland V."/>
            <person name="Plunkett G. III"/>
            <person name="Redford P."/>
            <person name="Roesch P."/>
            <person name="Rasko D."/>
            <person name="Buckles E.L."/>
            <person name="Liou S.-R."/>
            <person name="Boutin A."/>
            <person name="Hackett J."/>
            <person name="Stroud D."/>
            <person name="Mayhew G.F."/>
            <person name="Rose D.J."/>
            <person name="Zhou S."/>
            <person name="Schwartz D.C."/>
            <person name="Perna N.T."/>
            <person name="Mobley H.L.T."/>
            <person name="Donnenberg M.S."/>
            <person name="Blattner F.R."/>
        </authorList>
    </citation>
    <scope>NUCLEOTIDE SEQUENCE [LARGE SCALE GENOMIC DNA]</scope>
    <source>
        <strain>CFT073 / ATCC 700928 / UPEC</strain>
    </source>
</reference>
<name>RL9_ECOL6</name>
<keyword id="KW-0007">Acetylation</keyword>
<keyword id="KW-1185">Reference proteome</keyword>
<keyword id="KW-0687">Ribonucleoprotein</keyword>
<keyword id="KW-0689">Ribosomal protein</keyword>
<keyword id="KW-0694">RNA-binding</keyword>
<keyword id="KW-0699">rRNA-binding</keyword>